<sequence length="313" mass="34803">MNEYIGQGNIKKRLGLAIKASKIRKEALDHVLLVGPPGLGKTTLAHIISNELGTNIHVTSGPILEKQGDVAAILTNLEHGDVLFIDEIHRMNRSVEEILYTAMEDFQIDILIGKGPSARSIRIDLQPFTLVGATTRSGLLSAPLRNRFGLIMELDFYSIDELSKIIERAAIVLNVEIEKDAAILLAKRSRGTPRIALRLLRRVRDMSTIRGKVKIDIYMVEEIMFLLGIDKEGLDELDRKILRTIIEVYNGGPVGVKSLAASVGISEDSISEVYEPYLLQSGFIARTHRGRIATKKAYNHLGIKVQRGLFDEE</sequence>
<keyword id="KW-0067">ATP-binding</keyword>
<keyword id="KW-0963">Cytoplasm</keyword>
<keyword id="KW-0227">DNA damage</keyword>
<keyword id="KW-0233">DNA recombination</keyword>
<keyword id="KW-0234">DNA repair</keyword>
<keyword id="KW-0238">DNA-binding</keyword>
<keyword id="KW-0378">Hydrolase</keyword>
<keyword id="KW-0547">Nucleotide-binding</keyword>
<comment type="function">
    <text evidence="1">The RuvA-RuvB-RuvC complex processes Holliday junction (HJ) DNA during genetic recombination and DNA repair, while the RuvA-RuvB complex plays an important role in the rescue of blocked DNA replication forks via replication fork reversal (RFR). RuvA specifically binds to HJ cruciform DNA, conferring on it an open structure. The RuvB hexamer acts as an ATP-dependent pump, pulling dsDNA into and through the RuvAB complex. RuvB forms 2 homohexamers on either side of HJ DNA bound by 1 or 2 RuvA tetramers; 4 subunits per hexamer contact DNA at a time. Coordinated motions by a converter formed by DNA-disengaged RuvB subunits stimulates ATP hydrolysis and nucleotide exchange. Immobilization of the converter enables RuvB to convert the ATP-contained energy into a lever motion, pulling 2 nucleotides of DNA out of the RuvA tetramer per ATP hydrolyzed, thus driving DNA branch migration. The RuvB motors rotate together with the DNA substrate, which together with the progressing nucleotide cycle form the mechanistic basis for DNA recombination by continuous HJ branch migration. Branch migration allows RuvC to scan DNA until it finds its consensus sequence, where it cleaves and resolves cruciform DNA.</text>
</comment>
<comment type="catalytic activity">
    <reaction evidence="1">
        <text>ATP + H2O = ADP + phosphate + H(+)</text>
        <dbReference type="Rhea" id="RHEA:13065"/>
        <dbReference type="ChEBI" id="CHEBI:15377"/>
        <dbReference type="ChEBI" id="CHEBI:15378"/>
        <dbReference type="ChEBI" id="CHEBI:30616"/>
        <dbReference type="ChEBI" id="CHEBI:43474"/>
        <dbReference type="ChEBI" id="CHEBI:456216"/>
    </reaction>
</comment>
<comment type="subunit">
    <text evidence="1">Homohexamer. Forms an RuvA(8)-RuvB(12)-Holliday junction (HJ) complex. HJ DNA is sandwiched between 2 RuvA tetramers; dsDNA enters through RuvA and exits via RuvB. An RuvB hexamer assembles on each DNA strand where it exits the tetramer. Each RuvB hexamer is contacted by two RuvA subunits (via domain III) on 2 adjacent RuvB subunits; this complex drives branch migration. In the full resolvosome a probable DNA-RuvA(4)-RuvB(12)-RuvC(2) complex forms which resolves the HJ.</text>
</comment>
<comment type="subcellular location">
    <subcellularLocation>
        <location evidence="1">Cytoplasm</location>
    </subcellularLocation>
</comment>
<comment type="domain">
    <text evidence="1">Has 3 domains, the large (RuvB-L) and small ATPase (RuvB-S) domains and the C-terminal head (RuvB-H) domain. The head domain binds DNA, while the ATPase domains jointly bind ATP, ADP or are empty depending on the state of the subunit in the translocation cycle. During a single DNA translocation step the structure of each domain remains the same, but their relative positions change.</text>
</comment>
<comment type="similarity">
    <text evidence="1">Belongs to the RuvB family.</text>
</comment>
<evidence type="ECO:0000255" key="1">
    <source>
        <dbReference type="HAMAP-Rule" id="MF_00016"/>
    </source>
</evidence>
<name>RUVB_THEM4</name>
<feature type="chain" id="PRO_0000322848" description="Holliday junction branch migration complex subunit RuvB">
    <location>
        <begin position="1"/>
        <end position="313"/>
    </location>
</feature>
<feature type="region of interest" description="Large ATPase domain (RuvB-L)" evidence="1">
    <location>
        <begin position="1"/>
        <end position="157"/>
    </location>
</feature>
<feature type="region of interest" description="Small ATPAse domain (RuvB-S)" evidence="1">
    <location>
        <begin position="158"/>
        <end position="228"/>
    </location>
</feature>
<feature type="region of interest" description="Head domain (RuvB-H)" evidence="1">
    <location>
        <begin position="231"/>
        <end position="313"/>
    </location>
</feature>
<feature type="binding site" evidence="1">
    <location>
        <position position="38"/>
    </location>
    <ligand>
        <name>ATP</name>
        <dbReference type="ChEBI" id="CHEBI:30616"/>
    </ligand>
</feature>
<feature type="binding site" evidence="1">
    <location>
        <position position="41"/>
    </location>
    <ligand>
        <name>ATP</name>
        <dbReference type="ChEBI" id="CHEBI:30616"/>
    </ligand>
</feature>
<feature type="binding site" evidence="1">
    <location>
        <position position="42"/>
    </location>
    <ligand>
        <name>ATP</name>
        <dbReference type="ChEBI" id="CHEBI:30616"/>
    </ligand>
</feature>
<feature type="binding site" evidence="1">
    <location>
        <position position="42"/>
    </location>
    <ligand>
        <name>Mg(2+)</name>
        <dbReference type="ChEBI" id="CHEBI:18420"/>
    </ligand>
</feature>
<feature type="binding site" evidence="1">
    <location>
        <position position="43"/>
    </location>
    <ligand>
        <name>ATP</name>
        <dbReference type="ChEBI" id="CHEBI:30616"/>
    </ligand>
</feature>
<feature type="binding site" evidence="1">
    <location>
        <begin position="104"/>
        <end position="106"/>
    </location>
    <ligand>
        <name>ATP</name>
        <dbReference type="ChEBI" id="CHEBI:30616"/>
    </ligand>
</feature>
<feature type="binding site" evidence="1">
    <location>
        <position position="147"/>
    </location>
    <ligand>
        <name>ATP</name>
        <dbReference type="ChEBI" id="CHEBI:30616"/>
    </ligand>
</feature>
<feature type="binding site" evidence="1">
    <location>
        <position position="157"/>
    </location>
    <ligand>
        <name>ATP</name>
        <dbReference type="ChEBI" id="CHEBI:30616"/>
    </ligand>
</feature>
<feature type="binding site" evidence="1">
    <location>
        <position position="194"/>
    </location>
    <ligand>
        <name>ATP</name>
        <dbReference type="ChEBI" id="CHEBI:30616"/>
    </ligand>
</feature>
<feature type="binding site" evidence="1">
    <location>
        <position position="286"/>
    </location>
    <ligand>
        <name>DNA</name>
        <dbReference type="ChEBI" id="CHEBI:16991"/>
    </ligand>
</feature>
<feature type="binding site" evidence="1">
    <location>
        <position position="291"/>
    </location>
    <ligand>
        <name>DNA</name>
        <dbReference type="ChEBI" id="CHEBI:16991"/>
    </ligand>
</feature>
<reference key="1">
    <citation type="submission" date="2007-05" db="EMBL/GenBank/DDBJ databases">
        <title>Complete sequence of Thermosipho melanesiensis BI429.</title>
        <authorList>
            <consortium name="US DOE Joint Genome Institute"/>
            <person name="Copeland A."/>
            <person name="Lucas S."/>
            <person name="Lapidus A."/>
            <person name="Barry K."/>
            <person name="Glavina del Rio T."/>
            <person name="Dalin E."/>
            <person name="Tice H."/>
            <person name="Pitluck S."/>
            <person name="Chertkov O."/>
            <person name="Brettin T."/>
            <person name="Bruce D."/>
            <person name="Detter J.C."/>
            <person name="Han C."/>
            <person name="Schmutz J."/>
            <person name="Larimer F."/>
            <person name="Land M."/>
            <person name="Hauser L."/>
            <person name="Kyrpides N."/>
            <person name="Mikhailova N."/>
            <person name="Nelson K."/>
            <person name="Gogarten J.P."/>
            <person name="Noll K."/>
            <person name="Richardson P."/>
        </authorList>
    </citation>
    <scope>NUCLEOTIDE SEQUENCE [LARGE SCALE GENOMIC DNA]</scope>
    <source>
        <strain>DSM 12029 / CIP 104789 / BI429</strain>
    </source>
</reference>
<proteinExistence type="inferred from homology"/>
<protein>
    <recommendedName>
        <fullName evidence="1">Holliday junction branch migration complex subunit RuvB</fullName>
        <ecNumber evidence="1">3.6.4.-</ecNumber>
    </recommendedName>
</protein>
<dbReference type="EC" id="3.6.4.-" evidence="1"/>
<dbReference type="EMBL" id="CP000716">
    <property type="protein sequence ID" value="ABR31383.1"/>
    <property type="molecule type" value="Genomic_DNA"/>
</dbReference>
<dbReference type="SMR" id="A6LN82"/>
<dbReference type="STRING" id="391009.Tmel_1538"/>
<dbReference type="KEGG" id="tme:Tmel_1538"/>
<dbReference type="eggNOG" id="COG2255">
    <property type="taxonomic scope" value="Bacteria"/>
</dbReference>
<dbReference type="HOGENOM" id="CLU_055599_1_0_0"/>
<dbReference type="Proteomes" id="UP000001110">
    <property type="component" value="Chromosome"/>
</dbReference>
<dbReference type="GO" id="GO:0005737">
    <property type="term" value="C:cytoplasm"/>
    <property type="evidence" value="ECO:0007669"/>
    <property type="project" value="UniProtKB-SubCell"/>
</dbReference>
<dbReference type="GO" id="GO:0048476">
    <property type="term" value="C:Holliday junction resolvase complex"/>
    <property type="evidence" value="ECO:0007669"/>
    <property type="project" value="UniProtKB-UniRule"/>
</dbReference>
<dbReference type="GO" id="GO:0005524">
    <property type="term" value="F:ATP binding"/>
    <property type="evidence" value="ECO:0007669"/>
    <property type="project" value="UniProtKB-UniRule"/>
</dbReference>
<dbReference type="GO" id="GO:0016887">
    <property type="term" value="F:ATP hydrolysis activity"/>
    <property type="evidence" value="ECO:0007669"/>
    <property type="project" value="InterPro"/>
</dbReference>
<dbReference type="GO" id="GO:0000400">
    <property type="term" value="F:four-way junction DNA binding"/>
    <property type="evidence" value="ECO:0007669"/>
    <property type="project" value="UniProtKB-UniRule"/>
</dbReference>
<dbReference type="GO" id="GO:0009378">
    <property type="term" value="F:four-way junction helicase activity"/>
    <property type="evidence" value="ECO:0007669"/>
    <property type="project" value="InterPro"/>
</dbReference>
<dbReference type="GO" id="GO:0006310">
    <property type="term" value="P:DNA recombination"/>
    <property type="evidence" value="ECO:0007669"/>
    <property type="project" value="UniProtKB-UniRule"/>
</dbReference>
<dbReference type="GO" id="GO:0006281">
    <property type="term" value="P:DNA repair"/>
    <property type="evidence" value="ECO:0007669"/>
    <property type="project" value="UniProtKB-UniRule"/>
</dbReference>
<dbReference type="CDD" id="cd00009">
    <property type="entry name" value="AAA"/>
    <property type="match status" value="1"/>
</dbReference>
<dbReference type="Gene3D" id="1.10.8.60">
    <property type="match status" value="1"/>
</dbReference>
<dbReference type="Gene3D" id="3.40.50.300">
    <property type="entry name" value="P-loop containing nucleotide triphosphate hydrolases"/>
    <property type="match status" value="1"/>
</dbReference>
<dbReference type="Gene3D" id="1.10.10.10">
    <property type="entry name" value="Winged helix-like DNA-binding domain superfamily/Winged helix DNA-binding domain"/>
    <property type="match status" value="1"/>
</dbReference>
<dbReference type="HAMAP" id="MF_00016">
    <property type="entry name" value="DNA_HJ_migration_RuvB"/>
    <property type="match status" value="1"/>
</dbReference>
<dbReference type="InterPro" id="IPR003593">
    <property type="entry name" value="AAA+_ATPase"/>
</dbReference>
<dbReference type="InterPro" id="IPR041445">
    <property type="entry name" value="AAA_lid_4"/>
</dbReference>
<dbReference type="InterPro" id="IPR000641">
    <property type="entry name" value="CbxX/CfxQ"/>
</dbReference>
<dbReference type="InterPro" id="IPR004605">
    <property type="entry name" value="DNA_helicase_Holl-junc_RuvB"/>
</dbReference>
<dbReference type="InterPro" id="IPR027417">
    <property type="entry name" value="P-loop_NTPase"/>
</dbReference>
<dbReference type="InterPro" id="IPR008824">
    <property type="entry name" value="RuvB-like_N"/>
</dbReference>
<dbReference type="InterPro" id="IPR008823">
    <property type="entry name" value="RuvB_C"/>
</dbReference>
<dbReference type="InterPro" id="IPR036388">
    <property type="entry name" value="WH-like_DNA-bd_sf"/>
</dbReference>
<dbReference type="InterPro" id="IPR036390">
    <property type="entry name" value="WH_DNA-bd_sf"/>
</dbReference>
<dbReference type="NCBIfam" id="NF000868">
    <property type="entry name" value="PRK00080.1"/>
    <property type="match status" value="1"/>
</dbReference>
<dbReference type="NCBIfam" id="TIGR00635">
    <property type="entry name" value="ruvB"/>
    <property type="match status" value="1"/>
</dbReference>
<dbReference type="PANTHER" id="PTHR42848">
    <property type="match status" value="1"/>
</dbReference>
<dbReference type="PANTHER" id="PTHR42848:SF1">
    <property type="entry name" value="HOLLIDAY JUNCTION BRANCH MIGRATION COMPLEX SUBUNIT RUVB"/>
    <property type="match status" value="1"/>
</dbReference>
<dbReference type="Pfam" id="PF17864">
    <property type="entry name" value="AAA_lid_4"/>
    <property type="match status" value="1"/>
</dbReference>
<dbReference type="Pfam" id="PF05491">
    <property type="entry name" value="RuvB_C"/>
    <property type="match status" value="1"/>
</dbReference>
<dbReference type="Pfam" id="PF05496">
    <property type="entry name" value="RuvB_N"/>
    <property type="match status" value="1"/>
</dbReference>
<dbReference type="PRINTS" id="PR00819">
    <property type="entry name" value="CBXCFQXSUPER"/>
</dbReference>
<dbReference type="SMART" id="SM00382">
    <property type="entry name" value="AAA"/>
    <property type="match status" value="1"/>
</dbReference>
<dbReference type="SUPFAM" id="SSF52540">
    <property type="entry name" value="P-loop containing nucleoside triphosphate hydrolases"/>
    <property type="match status" value="1"/>
</dbReference>
<dbReference type="SUPFAM" id="SSF46785">
    <property type="entry name" value="Winged helix' DNA-binding domain"/>
    <property type="match status" value="1"/>
</dbReference>
<accession>A6LN82</accession>
<gene>
    <name evidence="1" type="primary">ruvB</name>
    <name type="ordered locus">Tmel_1538</name>
</gene>
<organism>
    <name type="scientific">Thermosipho melanesiensis (strain DSM 12029 / CIP 104789 / BI429)</name>
    <dbReference type="NCBI Taxonomy" id="391009"/>
    <lineage>
        <taxon>Bacteria</taxon>
        <taxon>Thermotogati</taxon>
        <taxon>Thermotogota</taxon>
        <taxon>Thermotogae</taxon>
        <taxon>Thermotogales</taxon>
        <taxon>Fervidobacteriaceae</taxon>
        <taxon>Thermosipho</taxon>
    </lineage>
</organism>